<proteinExistence type="inferred from homology"/>
<feature type="chain" id="PRO_1000068458" description="Glutathione-regulated potassium-efflux system protein KefB">
    <location>
        <begin position="1"/>
        <end position="601"/>
    </location>
</feature>
<feature type="transmembrane region" description="Helical" evidence="1">
    <location>
        <begin position="4"/>
        <end position="24"/>
    </location>
</feature>
<feature type="transmembrane region" description="Helical" evidence="1">
    <location>
        <begin position="29"/>
        <end position="49"/>
    </location>
</feature>
<feature type="transmembrane region" description="Helical" evidence="1">
    <location>
        <begin position="55"/>
        <end position="75"/>
    </location>
</feature>
<feature type="transmembrane region" description="Helical" evidence="1">
    <location>
        <begin position="87"/>
        <end position="107"/>
    </location>
</feature>
<feature type="transmembrane region" description="Helical" evidence="1">
    <location>
        <begin position="115"/>
        <end position="135"/>
    </location>
</feature>
<feature type="transmembrane region" description="Helical" evidence="1">
    <location>
        <begin position="152"/>
        <end position="172"/>
    </location>
</feature>
<feature type="transmembrane region" description="Helical" evidence="1">
    <location>
        <begin position="177"/>
        <end position="197"/>
    </location>
</feature>
<feature type="transmembrane region" description="Helical" evidence="1">
    <location>
        <begin position="207"/>
        <end position="227"/>
    </location>
</feature>
<feature type="transmembrane region" description="Helical" evidence="1">
    <location>
        <begin position="230"/>
        <end position="250"/>
    </location>
</feature>
<feature type="transmembrane region" description="Helical" evidence="1">
    <location>
        <begin position="268"/>
        <end position="288"/>
    </location>
</feature>
<feature type="transmembrane region" description="Helical" evidence="1">
    <location>
        <begin position="291"/>
        <end position="311"/>
    </location>
</feature>
<feature type="transmembrane region" description="Helical" evidence="1">
    <location>
        <begin position="326"/>
        <end position="346"/>
    </location>
</feature>
<feature type="transmembrane region" description="Helical" evidence="1">
    <location>
        <begin position="356"/>
        <end position="376"/>
    </location>
</feature>
<feature type="domain" description="RCK N-terminal" evidence="2">
    <location>
        <begin position="400"/>
        <end position="519"/>
    </location>
</feature>
<keyword id="KW-0050">Antiport</keyword>
<keyword id="KW-0997">Cell inner membrane</keyword>
<keyword id="KW-1003">Cell membrane</keyword>
<keyword id="KW-0406">Ion transport</keyword>
<keyword id="KW-0472">Membrane</keyword>
<keyword id="KW-0630">Potassium</keyword>
<keyword id="KW-0633">Potassium transport</keyword>
<keyword id="KW-0812">Transmembrane</keyword>
<keyword id="KW-1133">Transmembrane helix</keyword>
<keyword id="KW-0813">Transport</keyword>
<gene>
    <name evidence="1" type="primary">kefB</name>
    <name type="ordered locus">KPN78578_36990</name>
    <name type="ORF">KPN_03736</name>
</gene>
<comment type="function">
    <text evidence="1">Pore-forming subunit of a potassium efflux system that confers protection against electrophiles. Catalyzes K(+)/H(+) antiport.</text>
</comment>
<comment type="subunit">
    <text evidence="1">Interacts with the regulatory subunit KefG.</text>
</comment>
<comment type="subcellular location">
    <subcellularLocation>
        <location evidence="1">Cell inner membrane</location>
        <topology evidence="1">Multi-pass membrane protein</topology>
    </subcellularLocation>
</comment>
<comment type="similarity">
    <text evidence="1">Belongs to the monovalent cation:proton antiporter 2 (CPA2) transporter (TC 2.A.37) family. KefB subfamily.</text>
</comment>
<dbReference type="EMBL" id="CP000647">
    <property type="protein sequence ID" value="ABR79123.1"/>
    <property type="molecule type" value="Genomic_DNA"/>
</dbReference>
<dbReference type="RefSeq" id="WP_015959084.1">
    <property type="nucleotide sequence ID" value="NC_009648.1"/>
</dbReference>
<dbReference type="SMR" id="A6TEY9"/>
<dbReference type="STRING" id="272620.KPN_03736"/>
<dbReference type="PaxDb" id="272620-KPN_03736"/>
<dbReference type="DNASU" id="5338070"/>
<dbReference type="EnsemblBacteria" id="ABR79123">
    <property type="protein sequence ID" value="ABR79123"/>
    <property type="gene ID" value="KPN_03736"/>
</dbReference>
<dbReference type="KEGG" id="kpn:KPN_03736"/>
<dbReference type="HOGENOM" id="CLU_005126_9_3_6"/>
<dbReference type="Proteomes" id="UP000000265">
    <property type="component" value="Chromosome"/>
</dbReference>
<dbReference type="GO" id="GO:0005886">
    <property type="term" value="C:plasma membrane"/>
    <property type="evidence" value="ECO:0007669"/>
    <property type="project" value="UniProtKB-SubCell"/>
</dbReference>
<dbReference type="GO" id="GO:0015503">
    <property type="term" value="F:glutathione-regulated potassium exporter activity"/>
    <property type="evidence" value="ECO:0007669"/>
    <property type="project" value="UniProtKB-UniRule"/>
</dbReference>
<dbReference type="GO" id="GO:1902600">
    <property type="term" value="P:proton transmembrane transport"/>
    <property type="evidence" value="ECO:0007669"/>
    <property type="project" value="InterPro"/>
</dbReference>
<dbReference type="FunFam" id="1.20.1530.20:FF:000001">
    <property type="entry name" value="Glutathione-regulated potassium-efflux system protein KefB"/>
    <property type="match status" value="1"/>
</dbReference>
<dbReference type="FunFam" id="3.40.50.720:FF:000036">
    <property type="entry name" value="Glutathione-regulated potassium-efflux system protein KefB"/>
    <property type="match status" value="1"/>
</dbReference>
<dbReference type="Gene3D" id="1.20.1530.20">
    <property type="match status" value="1"/>
</dbReference>
<dbReference type="Gene3D" id="3.40.50.720">
    <property type="entry name" value="NAD(P)-binding Rossmann-like Domain"/>
    <property type="match status" value="1"/>
</dbReference>
<dbReference type="HAMAP" id="MF_01412">
    <property type="entry name" value="K_H_efflux_KefB"/>
    <property type="match status" value="1"/>
</dbReference>
<dbReference type="InterPro" id="IPR006153">
    <property type="entry name" value="Cation/H_exchanger_TM"/>
</dbReference>
<dbReference type="InterPro" id="IPR004771">
    <property type="entry name" value="K/H_exchanger"/>
</dbReference>
<dbReference type="InterPro" id="IPR020884">
    <property type="entry name" value="K_H_efflux_KefB"/>
</dbReference>
<dbReference type="InterPro" id="IPR038770">
    <property type="entry name" value="Na+/solute_symporter_sf"/>
</dbReference>
<dbReference type="InterPro" id="IPR036291">
    <property type="entry name" value="NAD(P)-bd_dom_sf"/>
</dbReference>
<dbReference type="InterPro" id="IPR003148">
    <property type="entry name" value="RCK_N"/>
</dbReference>
<dbReference type="NCBIfam" id="TIGR00932">
    <property type="entry name" value="2a37"/>
    <property type="match status" value="1"/>
</dbReference>
<dbReference type="NCBIfam" id="NF002973">
    <property type="entry name" value="PRK03659.1"/>
    <property type="match status" value="1"/>
</dbReference>
<dbReference type="PANTHER" id="PTHR46157">
    <property type="entry name" value="K(+) EFFLUX ANTIPORTER 3, CHLOROPLASTIC"/>
    <property type="match status" value="1"/>
</dbReference>
<dbReference type="PANTHER" id="PTHR46157:SF4">
    <property type="entry name" value="K(+) EFFLUX ANTIPORTER 3, CHLOROPLASTIC"/>
    <property type="match status" value="1"/>
</dbReference>
<dbReference type="Pfam" id="PF00999">
    <property type="entry name" value="Na_H_Exchanger"/>
    <property type="match status" value="1"/>
</dbReference>
<dbReference type="Pfam" id="PF02254">
    <property type="entry name" value="TrkA_N"/>
    <property type="match status" value="1"/>
</dbReference>
<dbReference type="SUPFAM" id="SSF51735">
    <property type="entry name" value="NAD(P)-binding Rossmann-fold domains"/>
    <property type="match status" value="1"/>
</dbReference>
<dbReference type="PROSITE" id="PS51201">
    <property type="entry name" value="RCK_N"/>
    <property type="match status" value="1"/>
</dbReference>
<evidence type="ECO:0000255" key="1">
    <source>
        <dbReference type="HAMAP-Rule" id="MF_01412"/>
    </source>
</evidence>
<evidence type="ECO:0000255" key="2">
    <source>
        <dbReference type="PROSITE-ProRule" id="PRU00543"/>
    </source>
</evidence>
<sequence>MAGSDLLLAGVLFLFAAVIAVPLASRLGIGAVLGYLLAGIAIGPWGLGFISDVDEILHFSELGVVFLMFIIGLELNPAKLWRLRSSIFGVGAAQVMLSAAILGGLLMTTGFSWQAAVVGGIGLAMSSTAMALQLMREKGMSRSEAGQLGFSVLLFQDLAVIPALALVPLLAGSADEHVNWLTVGMKVLAFAGMLIGGRYLLRPVFRFIASSGVREVFTAATLLLVLGSALFMEALGLSMALGTFIAGVLLAESEYRHELEIAIDPFKGLLLGLFFISVGMALNLGVLYTHLLWVAVSVAVLVAVKMLVLYLLARLYGLRSSERMQFAGVLSQGGEFAFVLFSLPASQRLFLHDQMALLLVAVTLSMMTTPLLMKGIDKLLSRRLNPADDTGEAPWVEDDKPQVIIVGFGRFGQVIGRLLMANKMRITVLERDISAVNLMRNYGYKVYFGDATQLELLRSAGAEEAQSIVITCNEPEDTMRLVEMCQQHFPHLHILARARGRVEAHELLQAGVTQFSRETFSSALELGRKALITLGMHPHQAQRAQLHFRRLDMRMLRELMPVHTDTVQISRVREARRELEEIFQREMQKESRQLDGWDEFE</sequence>
<protein>
    <recommendedName>
        <fullName evidence="1">Glutathione-regulated potassium-efflux system protein KefB</fullName>
    </recommendedName>
    <alternativeName>
        <fullName evidence="1">K(+)/H(+) antiporter</fullName>
    </alternativeName>
</protein>
<reference key="1">
    <citation type="submission" date="2006-09" db="EMBL/GenBank/DDBJ databases">
        <authorList>
            <consortium name="The Klebsiella pneumonia Genome Sequencing Project"/>
            <person name="McClelland M."/>
            <person name="Sanderson E.K."/>
            <person name="Spieth J."/>
            <person name="Clifton W.S."/>
            <person name="Latreille P."/>
            <person name="Sabo A."/>
            <person name="Pepin K."/>
            <person name="Bhonagiri V."/>
            <person name="Porwollik S."/>
            <person name="Ali J."/>
            <person name="Wilson R.K."/>
        </authorList>
    </citation>
    <scope>NUCLEOTIDE SEQUENCE [LARGE SCALE GENOMIC DNA]</scope>
    <source>
        <strain>ATCC 700721 / MGH 78578</strain>
    </source>
</reference>
<name>KEFB_KLEP7</name>
<organism>
    <name type="scientific">Klebsiella pneumoniae subsp. pneumoniae (strain ATCC 700721 / MGH 78578)</name>
    <dbReference type="NCBI Taxonomy" id="272620"/>
    <lineage>
        <taxon>Bacteria</taxon>
        <taxon>Pseudomonadati</taxon>
        <taxon>Pseudomonadota</taxon>
        <taxon>Gammaproteobacteria</taxon>
        <taxon>Enterobacterales</taxon>
        <taxon>Enterobacteriaceae</taxon>
        <taxon>Klebsiella/Raoultella group</taxon>
        <taxon>Klebsiella</taxon>
        <taxon>Klebsiella pneumoniae complex</taxon>
    </lineage>
</organism>
<accession>A6TEY9</accession>